<protein>
    <recommendedName>
        <fullName evidence="1">Endoribonuclease YbeY</fullName>
        <ecNumber evidence="1">3.1.-.-</ecNumber>
    </recommendedName>
</protein>
<accession>A6SV22</accession>
<proteinExistence type="inferred from homology"/>
<dbReference type="EC" id="3.1.-.-" evidence="1"/>
<dbReference type="EMBL" id="CP000269">
    <property type="protein sequence ID" value="ABR90162.1"/>
    <property type="molecule type" value="Genomic_DNA"/>
</dbReference>
<dbReference type="RefSeq" id="WP_012078294.1">
    <property type="nucleotide sequence ID" value="NC_009659.1"/>
</dbReference>
<dbReference type="SMR" id="A6SV22"/>
<dbReference type="STRING" id="375286.mma_0429"/>
<dbReference type="KEGG" id="mms:mma_0429"/>
<dbReference type="eggNOG" id="COG0319">
    <property type="taxonomic scope" value="Bacteria"/>
</dbReference>
<dbReference type="HOGENOM" id="CLU_106710_0_1_4"/>
<dbReference type="Proteomes" id="UP000006388">
    <property type="component" value="Chromosome"/>
</dbReference>
<dbReference type="GO" id="GO:0005737">
    <property type="term" value="C:cytoplasm"/>
    <property type="evidence" value="ECO:0007669"/>
    <property type="project" value="UniProtKB-SubCell"/>
</dbReference>
<dbReference type="GO" id="GO:0004222">
    <property type="term" value="F:metalloendopeptidase activity"/>
    <property type="evidence" value="ECO:0007669"/>
    <property type="project" value="InterPro"/>
</dbReference>
<dbReference type="GO" id="GO:0004521">
    <property type="term" value="F:RNA endonuclease activity"/>
    <property type="evidence" value="ECO:0007669"/>
    <property type="project" value="UniProtKB-UniRule"/>
</dbReference>
<dbReference type="GO" id="GO:0008270">
    <property type="term" value="F:zinc ion binding"/>
    <property type="evidence" value="ECO:0007669"/>
    <property type="project" value="UniProtKB-UniRule"/>
</dbReference>
<dbReference type="GO" id="GO:0006364">
    <property type="term" value="P:rRNA processing"/>
    <property type="evidence" value="ECO:0007669"/>
    <property type="project" value="UniProtKB-UniRule"/>
</dbReference>
<dbReference type="Gene3D" id="3.40.390.30">
    <property type="entry name" value="Metalloproteases ('zincins'), catalytic domain"/>
    <property type="match status" value="1"/>
</dbReference>
<dbReference type="HAMAP" id="MF_00009">
    <property type="entry name" value="Endoribonucl_YbeY"/>
    <property type="match status" value="1"/>
</dbReference>
<dbReference type="InterPro" id="IPR023091">
    <property type="entry name" value="MetalPrtase_cat_dom_sf_prd"/>
</dbReference>
<dbReference type="InterPro" id="IPR002036">
    <property type="entry name" value="YbeY"/>
</dbReference>
<dbReference type="InterPro" id="IPR020549">
    <property type="entry name" value="YbeY_CS"/>
</dbReference>
<dbReference type="NCBIfam" id="TIGR00043">
    <property type="entry name" value="rRNA maturation RNase YbeY"/>
    <property type="match status" value="1"/>
</dbReference>
<dbReference type="PANTHER" id="PTHR46986">
    <property type="entry name" value="ENDORIBONUCLEASE YBEY, CHLOROPLASTIC"/>
    <property type="match status" value="1"/>
</dbReference>
<dbReference type="PANTHER" id="PTHR46986:SF1">
    <property type="entry name" value="ENDORIBONUCLEASE YBEY, CHLOROPLASTIC"/>
    <property type="match status" value="1"/>
</dbReference>
<dbReference type="Pfam" id="PF02130">
    <property type="entry name" value="YbeY"/>
    <property type="match status" value="1"/>
</dbReference>
<dbReference type="SUPFAM" id="SSF55486">
    <property type="entry name" value="Metalloproteases ('zincins'), catalytic domain"/>
    <property type="match status" value="1"/>
</dbReference>
<dbReference type="PROSITE" id="PS01306">
    <property type="entry name" value="UPF0054"/>
    <property type="match status" value="1"/>
</dbReference>
<comment type="function">
    <text evidence="1">Single strand-specific metallo-endoribonuclease involved in late-stage 70S ribosome quality control and in maturation of the 3' terminus of the 16S rRNA.</text>
</comment>
<comment type="cofactor">
    <cofactor evidence="1">
        <name>Zn(2+)</name>
        <dbReference type="ChEBI" id="CHEBI:29105"/>
    </cofactor>
    <text evidence="1">Binds 1 zinc ion.</text>
</comment>
<comment type="subcellular location">
    <subcellularLocation>
        <location evidence="1">Cytoplasm</location>
    </subcellularLocation>
</comment>
<comment type="similarity">
    <text evidence="1">Belongs to the endoribonuclease YbeY family.</text>
</comment>
<feature type="chain" id="PRO_0000321776" description="Endoribonuclease YbeY">
    <location>
        <begin position="1"/>
        <end position="152"/>
    </location>
</feature>
<feature type="binding site" evidence="1">
    <location>
        <position position="113"/>
    </location>
    <ligand>
        <name>Zn(2+)</name>
        <dbReference type="ChEBI" id="CHEBI:29105"/>
        <note>catalytic</note>
    </ligand>
</feature>
<feature type="binding site" evidence="1">
    <location>
        <position position="117"/>
    </location>
    <ligand>
        <name>Zn(2+)</name>
        <dbReference type="ChEBI" id="CHEBI:29105"/>
        <note>catalytic</note>
    </ligand>
</feature>
<feature type="binding site" evidence="1">
    <location>
        <position position="123"/>
    </location>
    <ligand>
        <name>Zn(2+)</name>
        <dbReference type="ChEBI" id="CHEBI:29105"/>
        <note>catalytic</note>
    </ligand>
</feature>
<gene>
    <name evidence="1" type="primary">ybeY</name>
    <name type="ordered locus">mma_0429</name>
</gene>
<name>YBEY_JANMA</name>
<sequence>MLQKNKLSLSVQYPDKRLQDIITRPKLRSWVKAALLAPAQITLRFVDAAEGKDLNRNYRGKDYATNVLTFAYTEDEDSETTQADIILCTDVLQLEAAEQEKSVEEHAAHLVVHGVLHAQGYDHESDEEAEEMEALEIEILADLGFRNPYINL</sequence>
<organism>
    <name type="scientific">Janthinobacterium sp. (strain Marseille)</name>
    <name type="common">Minibacterium massiliensis</name>
    <dbReference type="NCBI Taxonomy" id="375286"/>
    <lineage>
        <taxon>Bacteria</taxon>
        <taxon>Pseudomonadati</taxon>
        <taxon>Pseudomonadota</taxon>
        <taxon>Betaproteobacteria</taxon>
        <taxon>Burkholderiales</taxon>
        <taxon>Oxalobacteraceae</taxon>
        <taxon>Janthinobacterium</taxon>
    </lineage>
</organism>
<evidence type="ECO:0000255" key="1">
    <source>
        <dbReference type="HAMAP-Rule" id="MF_00009"/>
    </source>
</evidence>
<keyword id="KW-0963">Cytoplasm</keyword>
<keyword id="KW-0255">Endonuclease</keyword>
<keyword id="KW-0378">Hydrolase</keyword>
<keyword id="KW-0479">Metal-binding</keyword>
<keyword id="KW-0540">Nuclease</keyword>
<keyword id="KW-0690">Ribosome biogenesis</keyword>
<keyword id="KW-0698">rRNA processing</keyword>
<keyword id="KW-0862">Zinc</keyword>
<reference key="1">
    <citation type="journal article" date="2007" name="PLoS Genet.">
        <title>Genome analysis of Minibacterium massiliensis highlights the convergent evolution of water-living bacteria.</title>
        <authorList>
            <person name="Audic S."/>
            <person name="Robert C."/>
            <person name="Campagna B."/>
            <person name="Parinello H."/>
            <person name="Claverie J.-M."/>
            <person name="Raoult D."/>
            <person name="Drancourt M."/>
        </authorList>
    </citation>
    <scope>NUCLEOTIDE SEQUENCE [LARGE SCALE GENOMIC DNA]</scope>
    <source>
        <strain>Marseille</strain>
    </source>
</reference>